<comment type="function">
    <text evidence="5 6 7 8 13">Ceramide synthase; part of the gene cluster that mediates the biosynthesis of fumonisins B1 (FB1), B2 (FB2), B3 (FB3), and B4 (FB4), which are carcinogenic mycotoxins (PubMed:12620260, PubMed:32546615, PubMed:38922130, PubMed:39704544). Plays a role in self-protection from FB1 toxicity by contributing to ceramide synthesis (PubMed:32546615, PubMed:38922130, PubMed:39704544). The biosynthesis starts with the FUM1-catalyzed carbon chain assembly from one molecule of acetyl-CoA, eight molecules of malonyl-CoA, and two molecules of methionine (in S-adenosyl form). The C18 polyketide chain is released from the enzyme by a nucleophilic attack of a carbanion, which is derived from R-carbon of alanine by decarboxylation, on the carbonyl carbon of polyketide acyl chain. This step is catalyzed by the pyridoxal 5'-phosphate-dependent aminoacyl transferase FUM8. The resultant 3-keto intermediate is then stereospecifically reduced to a 3-hydroxyl product by reductase FUM13. Subsequent oxidations at C-10 by the cytochrome P450 monooxygenase FUM2, C-14 and C-15 by FUM6, FUM12 or FUM15, tricarballylic esterification of the hydroxyl groups on C-14 and C-15 by acyltransferase FUM14, and C-5 hydroxylation by 2-keto-glutarate-dependent dioxygenase FUM3 furnish the biosynthesis of fumonisins. The tricarballylic moieties are most likely derived from the citric acid cycle, and their addition to the carbon backbone may involve FUM7, FUM10, FUM11 and FUM14 (Probable).</text>
</comment>
<comment type="pathway">
    <text evidence="5">Mycotoxin biosynthesis.</text>
</comment>
<comment type="subcellular location">
    <subcellularLocation>
        <location evidence="6 8">Endoplasmic reticulum membrane</location>
        <topology evidence="1">Multi-pass membrane protein</topology>
    </subcellularLocation>
</comment>
<comment type="induction">
    <text evidence="6">Induced by exogenous FB1.</text>
</comment>
<comment type="disruption phenotype">
    <text evidence="5 6 7 8">Does not affect the production of fumonisins B1, B2 and B3 (PubMed:12620260, PubMed:32546615, PubMed:39704544). Increases the production of ceramide intermediates including 3-ketosphinganine, sphinganine and phytosphingosine, in comparison to the control (PubMed:39704544). Causes significant growth inhibition in both solid and liquid media (PubMed:39704544). Double knockout of FUM17 and FUM18 does not reduce resistance to FB1 (PubMed:38922130).</text>
</comment>
<comment type="similarity">
    <text evidence="10">Belongs to the sphingosine N-acyltransferase family.</text>
</comment>
<comment type="sequence caution" evidence="10">
    <conflict type="erroneous gene model prediction">
        <sequence resource="EMBL-CDS" id="EWG36211"/>
    </conflict>
</comment>
<comment type="sequence caution" evidence="10">
    <conflict type="erroneous gene model prediction">
        <sequence resource="EMBL-CDS" id="EWG36212"/>
    </conflict>
</comment>
<name>FUM18_GIBM7</name>
<sequence length="427" mass="49117">MSIVFSVVRSRIPSHYGHYNHSHHPHFEDLVVKPLTNILPLLTGFTLLAGVILLIHISIPQAEPYTSKFLFLSHRQPSTGLYSVGDGDVCFVLFEVLTLAGLREGCMKYLLAPFARVMGVSKERKVVRFSEQGWILMYYSVFWPLGMLIWAKSPHFSDMDQLWIHWPQRDIDGLIKFYILTQLAYWIQQVISVNIEARRKDYWLNVVHHFITITLILLCYVYHHTRVGSLILVMMDAIEILFPFAKCLRYLGFTTLCDLVFFLFFVTWIVSRHVLYLMTCWSVYSDVPRIIEPSCFMGSANDLHGPLPVPDDWWHLIEPWIYPKGKVCHSDSFRVSILAYLLLLQVLMMIWFGFICKVAIGVLDGRAAEDVRSDVESDEEDSEPVANGSGWQQSQLQPGRRVGSNGAAQMVDGVKKDLRCNIHCNEE</sequence>
<evidence type="ECO:0000255" key="1"/>
<evidence type="ECO:0000255" key="2">
    <source>
        <dbReference type="PROSITE-ProRule" id="PRU00205"/>
    </source>
</evidence>
<evidence type="ECO:0000255" key="3">
    <source>
        <dbReference type="PROSITE-ProRule" id="PRU00498"/>
    </source>
</evidence>
<evidence type="ECO:0000256" key="4">
    <source>
        <dbReference type="SAM" id="MobiDB-lite"/>
    </source>
</evidence>
<evidence type="ECO:0000269" key="5">
    <source>
    </source>
</evidence>
<evidence type="ECO:0000269" key="6">
    <source>
    </source>
</evidence>
<evidence type="ECO:0000269" key="7">
    <source>
    </source>
</evidence>
<evidence type="ECO:0000269" key="8">
    <source>
    </source>
</evidence>
<evidence type="ECO:0000303" key="9">
    <source>
    </source>
</evidence>
<evidence type="ECO:0000305" key="10"/>
<evidence type="ECO:0000305" key="11">
    <source>
    </source>
</evidence>
<evidence type="ECO:0000305" key="12">
    <source>
    </source>
</evidence>
<evidence type="ECO:0000305" key="13">
    <source>
    </source>
</evidence>
<proteinExistence type="evidence at transcript level"/>
<reference key="1">
    <citation type="journal article" date="2003" name="Fungal Genet. Biol.">
        <title>Co-expression of 15 contiguous genes delineates a fumonisin biosynthetic gene cluster in Gibberella moniliformis.</title>
        <authorList>
            <person name="Proctor R.H."/>
            <person name="Brown D.W."/>
            <person name="Plattner R.D."/>
            <person name="Desjardins A.E."/>
        </authorList>
    </citation>
    <scope>NUCLEOTIDE SEQUENCE [GENOMIC DNA]</scope>
    <scope>DISRUPTION PHENOTYPE</scope>
    <scope>PATHWAY</scope>
    <source>
        <strain>M3125 / FGSC 7600</strain>
    </source>
</reference>
<reference key="2">
    <citation type="journal article" date="2010" name="Nature">
        <title>Comparative genomics reveals mobile pathogenicity chromosomes in Fusarium.</title>
        <authorList>
            <person name="Ma L.-J."/>
            <person name="van der Does H.C."/>
            <person name="Borkovich K.A."/>
            <person name="Coleman J.J."/>
            <person name="Daboussi M.-J."/>
            <person name="Di Pietro A."/>
            <person name="Dufresne M."/>
            <person name="Freitag M."/>
            <person name="Grabherr M."/>
            <person name="Henrissat B."/>
            <person name="Houterman P.M."/>
            <person name="Kang S."/>
            <person name="Shim W.-B."/>
            <person name="Woloshuk C."/>
            <person name="Xie X."/>
            <person name="Xu J.-R."/>
            <person name="Antoniw J."/>
            <person name="Baker S.E."/>
            <person name="Bluhm B.H."/>
            <person name="Breakspear A."/>
            <person name="Brown D.W."/>
            <person name="Butchko R.A.E."/>
            <person name="Chapman S."/>
            <person name="Coulson R."/>
            <person name="Coutinho P.M."/>
            <person name="Danchin E.G.J."/>
            <person name="Diener A."/>
            <person name="Gale L.R."/>
            <person name="Gardiner D.M."/>
            <person name="Goff S."/>
            <person name="Hammond-Kosack K.E."/>
            <person name="Hilburn K."/>
            <person name="Hua-Van A."/>
            <person name="Jonkers W."/>
            <person name="Kazan K."/>
            <person name="Kodira C.D."/>
            <person name="Koehrsen M."/>
            <person name="Kumar L."/>
            <person name="Lee Y.-H."/>
            <person name="Li L."/>
            <person name="Manners J.M."/>
            <person name="Miranda-Saavedra D."/>
            <person name="Mukherjee M."/>
            <person name="Park G."/>
            <person name="Park J."/>
            <person name="Park S.-Y."/>
            <person name="Proctor R.H."/>
            <person name="Regev A."/>
            <person name="Ruiz-Roldan M.C."/>
            <person name="Sain D."/>
            <person name="Sakthikumar S."/>
            <person name="Sykes S."/>
            <person name="Schwartz D.C."/>
            <person name="Turgeon B.G."/>
            <person name="Wapinski I."/>
            <person name="Yoder O."/>
            <person name="Young S."/>
            <person name="Zeng Q."/>
            <person name="Zhou S."/>
            <person name="Galagan J."/>
            <person name="Cuomo C.A."/>
            <person name="Kistler H.C."/>
            <person name="Rep M."/>
        </authorList>
    </citation>
    <scope>NUCLEOTIDE SEQUENCE [LARGE SCALE GENOMIC DNA]</scope>
    <source>
        <strain>M3125 / FGSC 7600</strain>
    </source>
</reference>
<reference evidence="10" key="3">
    <citation type="journal article" date="2020" name="MBio">
        <title>Self-Protection against the Sphingolipid Biosynthesis Inhibitor Fumonisin B1 Is Conferred by a FUM Cluster-Encoded Ceramide Synthase.</title>
        <authorList>
            <person name="Janevska S."/>
            <person name="Ferling I."/>
            <person name="Jojic K."/>
            <person name="Rautschek J."/>
            <person name="Hoefgen S."/>
            <person name="Proctor R.H."/>
            <person name="Hillmann F."/>
            <person name="Valiante V."/>
        </authorList>
    </citation>
    <scope>FUNCTION</scope>
    <scope>SUBCELLULAR LOCATION</scope>
    <scope>INDUCTION BY FUMONISIN B1</scope>
    <scope>DISRUPTION PHENOTYPE</scope>
</reference>
<reference evidence="10" key="4">
    <citation type="journal article" date="2024" name="MBio">
        <title>The palmitoyl-CoA ligase Fum16 is part of a Fusarium verticillioides fumonisin subcluster involved in self-protection.</title>
        <authorList>
            <person name="Gherlone F."/>
            <person name="Jojic K."/>
            <person name="Huang Y."/>
            <person name="Hoefgen S."/>
            <person name="Valiante V."/>
            <person name="Janevska S."/>
        </authorList>
    </citation>
    <scope>FUNCTION</scope>
    <scope>SUBCELLULAR LOCATION</scope>
    <scope>DISRUPTION PHENOTYPE</scope>
</reference>
<reference evidence="10" key="5">
    <citation type="journal article" date="2024" name="Toxins">
        <title>Mechanism of Fumonisin Self-Resistance: Fusarium verticillioides Contains Four Fumonisin B1-Insensitive-Ceramide Synthases.</title>
        <authorList>
            <person name="Krska T."/>
            <person name="Twaruschek K."/>
            <person name="Wiesenberger G."/>
            <person name="Berthiller F."/>
            <person name="Adam G."/>
        </authorList>
    </citation>
    <scope>FUNCTION</scope>
    <scope>DISRUPTION PHENOTYPE</scope>
</reference>
<keyword id="KW-0256">Endoplasmic reticulum</keyword>
<keyword id="KW-0325">Glycoprotein</keyword>
<keyword id="KW-0444">Lipid biosynthesis</keyword>
<keyword id="KW-0443">Lipid metabolism</keyword>
<keyword id="KW-0472">Membrane</keyword>
<keyword id="KW-1185">Reference proteome</keyword>
<keyword id="KW-0808">Transferase</keyword>
<keyword id="KW-0812">Transmembrane</keyword>
<keyword id="KW-1133">Transmembrane helix</keyword>
<gene>
    <name evidence="9" type="primary">FUM18</name>
    <name type="ORF">FVEG_00328</name>
</gene>
<dbReference type="EC" id="2.3.1.-" evidence="10"/>
<dbReference type="EMBL" id="AF155773">
    <property type="protein sequence ID" value="AAN74821.1"/>
    <property type="molecule type" value="Genomic_DNA"/>
</dbReference>
<dbReference type="EMBL" id="CM000578">
    <property type="protein sequence ID" value="EWG36211.1"/>
    <property type="status" value="ALT_SEQ"/>
    <property type="molecule type" value="Genomic_DNA"/>
</dbReference>
<dbReference type="EMBL" id="CM000578">
    <property type="protein sequence ID" value="EWG36212.1"/>
    <property type="status" value="ALT_SEQ"/>
    <property type="molecule type" value="Genomic_DNA"/>
</dbReference>
<dbReference type="RefSeq" id="XP_018742402.1">
    <property type="nucleotide sequence ID" value="XM_018886766.1"/>
</dbReference>
<dbReference type="RefSeq" id="XP_018742403.1">
    <property type="nucleotide sequence ID" value="XM_018886767.1"/>
</dbReference>
<dbReference type="SMR" id="Q8J2Q2"/>
<dbReference type="STRING" id="334819.Q8J2Q2"/>
<dbReference type="GlyCosmos" id="Q8J2Q2">
    <property type="glycosylation" value="2 sites, No reported glycans"/>
</dbReference>
<dbReference type="GeneID" id="30058705"/>
<dbReference type="KEGG" id="fvr:FVEG_00328"/>
<dbReference type="eggNOG" id="KOG1607">
    <property type="taxonomic scope" value="Eukaryota"/>
</dbReference>
<dbReference type="OrthoDB" id="72658at110618"/>
<dbReference type="Proteomes" id="UP000009096">
    <property type="component" value="Chromosome 1"/>
</dbReference>
<dbReference type="GO" id="GO:0016020">
    <property type="term" value="C:membrane"/>
    <property type="evidence" value="ECO:0007669"/>
    <property type="project" value="UniProtKB-SubCell"/>
</dbReference>
<dbReference type="GO" id="GO:0050291">
    <property type="term" value="F:sphingosine N-acyltransferase activity"/>
    <property type="evidence" value="ECO:0007669"/>
    <property type="project" value="InterPro"/>
</dbReference>
<dbReference type="GO" id="GO:0046513">
    <property type="term" value="P:ceramide biosynthetic process"/>
    <property type="evidence" value="ECO:0007669"/>
    <property type="project" value="InterPro"/>
</dbReference>
<dbReference type="InterPro" id="IPR016439">
    <property type="entry name" value="Lag1/Lac1-like"/>
</dbReference>
<dbReference type="InterPro" id="IPR006634">
    <property type="entry name" value="TLC-dom"/>
</dbReference>
<dbReference type="PANTHER" id="PTHR12560:SF0">
    <property type="entry name" value="LD18904P"/>
    <property type="match status" value="1"/>
</dbReference>
<dbReference type="PANTHER" id="PTHR12560">
    <property type="entry name" value="LONGEVITY ASSURANCE FACTOR 1 LAG1"/>
    <property type="match status" value="1"/>
</dbReference>
<dbReference type="Pfam" id="PF03798">
    <property type="entry name" value="TRAM_LAG1_CLN8"/>
    <property type="match status" value="1"/>
</dbReference>
<dbReference type="PIRSF" id="PIRSF005225">
    <property type="entry name" value="LAG1_LAC1"/>
    <property type="match status" value="1"/>
</dbReference>
<dbReference type="SMART" id="SM00724">
    <property type="entry name" value="TLC"/>
    <property type="match status" value="1"/>
</dbReference>
<dbReference type="PROSITE" id="PS50922">
    <property type="entry name" value="TLC"/>
    <property type="match status" value="1"/>
</dbReference>
<protein>
    <recommendedName>
        <fullName evidence="12">Ceramide Synthase FUM18</fullName>
        <ecNumber evidence="10">2.3.1.-</ecNumber>
    </recommendedName>
    <alternativeName>
        <fullName evidence="9">Fumonisin biosynthesis cluster protein 18</fullName>
    </alternativeName>
    <alternativeName>
        <fullName evidence="11">Sphingosine N-acyltransferase-like protein FUM18</fullName>
    </alternativeName>
</protein>
<organism>
    <name type="scientific">Gibberella moniliformis (strain M3125 / FGSC 7600)</name>
    <name type="common">Maize ear and stalk rot fungus</name>
    <name type="synonym">Fusarium verticillioides</name>
    <dbReference type="NCBI Taxonomy" id="334819"/>
    <lineage>
        <taxon>Eukaryota</taxon>
        <taxon>Fungi</taxon>
        <taxon>Dikarya</taxon>
        <taxon>Ascomycota</taxon>
        <taxon>Pezizomycotina</taxon>
        <taxon>Sordariomycetes</taxon>
        <taxon>Hypocreomycetidae</taxon>
        <taxon>Hypocreales</taxon>
        <taxon>Nectriaceae</taxon>
        <taxon>Fusarium</taxon>
        <taxon>Fusarium fujikuroi species complex</taxon>
    </lineage>
</organism>
<feature type="chain" id="PRO_0000441152" description="Ceramide Synthase FUM18">
    <location>
        <begin position="1"/>
        <end position="427"/>
    </location>
</feature>
<feature type="transmembrane region" description="Helical" evidence="1">
    <location>
        <begin position="38"/>
        <end position="58"/>
    </location>
</feature>
<feature type="transmembrane region" description="Helical" evidence="1">
    <location>
        <begin position="131"/>
        <end position="151"/>
    </location>
</feature>
<feature type="transmembrane region" description="Helical" evidence="1">
    <location>
        <begin position="173"/>
        <end position="193"/>
    </location>
</feature>
<feature type="transmembrane region" description="Helical" evidence="1">
    <location>
        <begin position="202"/>
        <end position="222"/>
    </location>
</feature>
<feature type="transmembrane region" description="Helical" evidence="1">
    <location>
        <begin position="250"/>
        <end position="270"/>
    </location>
</feature>
<feature type="transmembrane region" description="Helical" evidence="1">
    <location>
        <begin position="335"/>
        <end position="355"/>
    </location>
</feature>
<feature type="domain" description="TLC" evidence="2">
    <location>
        <begin position="124"/>
        <end position="364"/>
    </location>
</feature>
<feature type="region of interest" description="Disordered" evidence="4">
    <location>
        <begin position="373"/>
        <end position="406"/>
    </location>
</feature>
<feature type="glycosylation site" description="N-linked (GlcNAc...) asparagine" evidence="3">
    <location>
        <position position="20"/>
    </location>
</feature>
<feature type="glycosylation site" description="N-linked (GlcNAc...) asparagine" evidence="3">
    <location>
        <position position="387"/>
    </location>
</feature>
<accession>Q8J2Q2</accession>
<accession>W7LC95</accession>
<accession>W7LUG9</accession>